<protein>
    <recommendedName>
        <fullName>Capsid protein</fullName>
    </recommendedName>
    <alternativeName>
        <fullName>Coat protein</fullName>
    </alternativeName>
</protein>
<feature type="initiator methionine" description="Removed; by host" evidence="1 2">
    <location>
        <position position="1"/>
    </location>
</feature>
<feature type="chain" id="PRO_0000144943" description="Capsid protein">
    <location>
        <begin position="2"/>
        <end position="157"/>
    </location>
</feature>
<feature type="modified residue" description="N-acetylserine; by host" evidence="1">
    <location>
        <position position="2"/>
    </location>
</feature>
<feature type="sequence conflict" description="In Ref. 4; AA sequence." evidence="3" ref="4">
    <original>E</original>
    <variation>Q</variation>
    <location>
        <position position="96"/>
    </location>
</feature>
<feature type="sequence conflict" description="In Ref. 4; AA sequence." evidence="3" ref="4">
    <original>E</original>
    <variation>Q</variation>
    <location>
        <position position="100"/>
    </location>
</feature>
<feature type="sequence conflict" description="In Ref. 4; AA sequence and 2; AA sequence." evidence="3" ref="4 2">
    <original>E</original>
    <variation>Q</variation>
    <location>
        <position position="107"/>
    </location>
</feature>
<feature type="sequence conflict" description="In Ref. 2; AA sequence." evidence="3" ref="2">
    <original>N</original>
    <variation>D</variation>
    <location>
        <position position="110"/>
    </location>
</feature>
<feature type="sequence conflict" description="In Ref. 4; AA sequence and 2; AA sequence." evidence="3" ref="4 2">
    <original>GH</original>
    <variation>HG</variation>
    <location>
        <begin position="136"/>
        <end position="137"/>
    </location>
</feature>
<feature type="sequence conflict" description="In Ref. 2; AA sequence." evidence="3" ref="2">
    <original>N</original>
    <variation>D</variation>
    <location>
        <position position="141"/>
    </location>
</feature>
<feature type="sequence conflict" description="In Ref. 2; AA sequence." evidence="3" ref="2">
    <original>E</original>
    <variation>Q</variation>
    <location>
        <position position="144"/>
    </location>
</feature>
<feature type="helix" evidence="4">
    <location>
        <begin position="8"/>
        <end position="10"/>
    </location>
</feature>
<feature type="strand" evidence="4">
    <location>
        <begin position="12"/>
        <end position="16"/>
    </location>
</feature>
<feature type="helix" evidence="4">
    <location>
        <begin position="21"/>
        <end position="32"/>
    </location>
</feature>
<feature type="helix" evidence="4">
    <location>
        <begin position="40"/>
        <end position="52"/>
    </location>
</feature>
<feature type="strand" evidence="4">
    <location>
        <begin position="59"/>
        <end position="61"/>
    </location>
</feature>
<feature type="helix" evidence="4">
    <location>
        <begin position="77"/>
        <end position="87"/>
    </location>
</feature>
<feature type="strand" evidence="4">
    <location>
        <begin position="97"/>
        <end position="101"/>
    </location>
</feature>
<feature type="strand" evidence="4">
    <location>
        <begin position="106"/>
        <end position="108"/>
    </location>
</feature>
<feature type="helix" evidence="4">
    <location>
        <begin position="113"/>
        <end position="135"/>
    </location>
</feature>
<feature type="strand" evidence="4">
    <location>
        <begin position="137"/>
        <end position="140"/>
    </location>
</feature>
<feature type="turn" evidence="4">
    <location>
        <begin position="142"/>
        <end position="144"/>
    </location>
</feature>
<reference key="1">
    <citation type="submission" date="1996-09" db="EMBL/GenBank/DDBJ databases">
        <title>Coat protein open reading frame of ribgrass mosaic virus.</title>
        <authorList>
            <person name="Wang H."/>
            <person name="Culver J.N."/>
            <person name="Stubbs G."/>
        </authorList>
    </citation>
    <scope>NUCLEOTIDE SEQUENCE [GENOMIC RNA]</scope>
</reference>
<reference key="2">
    <citation type="journal article" date="1968" name="Nihon Shokubutsu Byori Gakkaiho">
        <title>Chemical studies on proteins from two tobacco mosaic virus strains.</title>
        <authorList>
            <person name="Funatsu G."/>
            <person name="Funatsu M."/>
        </authorList>
    </citation>
    <scope>PROTEIN SEQUENCE OF 2-157</scope>
</reference>
<reference key="3">
    <citation type="journal article" date="1969" name="Z. Naturforsch. B">
        <title>Primary protein structure of strains of the tobacco mosaic virus. V. Amino acid sequence (1-61) of the protein of tobacco mosaic virus strain Holmes rib grass.</title>
        <authorList>
            <person name="Jauregui-Adell J."/>
            <person name="Hindennach I."/>
            <person name="Wittmann H.G."/>
        </authorList>
    </citation>
    <scope>PROTEIN SEQUENCE OF 2-62</scope>
    <scope>ACETYLATION AT SER-2</scope>
</reference>
<reference key="4">
    <citation type="journal article" date="1969" name="Z. Naturforsch. B">
        <title>Part VI: amino-acid sequence (positions 62-156) of the protein of strain Holmes rib grass of tobacco mosaic virus.</title>
        <authorList>
            <person name="Wittmann H.G."/>
            <person name="Hindennach I."/>
            <person name="Wittmann-Liebold B."/>
        </authorList>
    </citation>
    <scope>PROTEIN SEQUENCE OF 63-157</scope>
</reference>
<reference key="5">
    <citation type="journal article" date="1997" name="J. Mol. Biol.">
        <title>Structure of ribgrass mosaic virus at 2.9-A resolution: evolution and taxonomy of tobamoviruses.</title>
        <authorList>
            <person name="Wang H."/>
            <person name="Culver J.N."/>
            <person name="Stubbs G."/>
        </authorList>
    </citation>
    <scope>X-RAY CRYSTALLOGRAPHY (2.9 ANGSTROMS)</scope>
</reference>
<organismHost>
    <name type="scientific">Digitalis lanata</name>
    <name type="common">Grecian foxglove</name>
    <dbReference type="NCBI Taxonomy" id="49450"/>
</organismHost>
<organismHost>
    <name type="scientific">Eutrema japonicum</name>
    <name type="common">Wasabi plant</name>
    <name type="synonym">Eutrema wasabi</name>
    <dbReference type="NCBI Taxonomy" id="75806"/>
</organismHost>
<organismHost>
    <name type="scientific">Nicotiana tabacum</name>
    <name type="common">Common tobacco</name>
    <dbReference type="NCBI Taxonomy" id="4097"/>
</organismHost>
<organismHost>
    <name type="scientific">Plantago lanceolata</name>
    <name type="common">English plantain</name>
    <name type="synonym">Ribwort plantain</name>
    <dbReference type="NCBI Taxonomy" id="39414"/>
</organismHost>
<organismHost>
    <name type="scientific">Plantago major</name>
    <name type="common">Common plantain</name>
    <dbReference type="NCBI Taxonomy" id="29818"/>
</organismHost>
<organismHost>
    <name type="scientific">Rorippa amphibia</name>
    <name type="common">Great yellow-cress</name>
    <name type="synonym">Nasturtium amphibium</name>
    <dbReference type="NCBI Taxonomy" id="65951"/>
</organismHost>
<organismHost>
    <name type="scientific">Rorippa sylvestris</name>
    <name type="common">Creeping yellow-cress</name>
    <name type="synonym">Nasturtium sylvestre</name>
    <dbReference type="NCBI Taxonomy" id="65952"/>
</organismHost>
<organismHost>
    <name type="scientific">Silene latifolia subsp. alba</name>
    <name type="common">White campion</name>
    <name type="synonym">Lychnis alba</name>
    <dbReference type="NCBI Taxonomy" id="52853"/>
</organismHost>
<organismHost>
    <name type="scientific">Sisymbrium loeselii</name>
    <dbReference type="NCBI Taxonomy" id="203579"/>
</organismHost>
<dbReference type="EMBL" id="U69271">
    <property type="protein sequence ID" value="AAB08579.1"/>
    <property type="molecule type" value="Genomic_RNA"/>
</dbReference>
<dbReference type="PDB" id="1RMV">
    <property type="method" value="Fiber"/>
    <property type="resolution" value="2.90 A"/>
    <property type="chains" value="A=2-157"/>
</dbReference>
<dbReference type="PDBsum" id="1RMV"/>
<dbReference type="SMR" id="P03580"/>
<dbReference type="iPTMnet" id="P03580"/>
<dbReference type="EvolutionaryTrace" id="P03580"/>
<dbReference type="GO" id="GO:0019029">
    <property type="term" value="C:helical viral capsid"/>
    <property type="evidence" value="ECO:0007669"/>
    <property type="project" value="UniProtKB-KW"/>
</dbReference>
<dbReference type="GO" id="GO:0005198">
    <property type="term" value="F:structural molecule activity"/>
    <property type="evidence" value="ECO:0007669"/>
    <property type="project" value="InterPro"/>
</dbReference>
<dbReference type="Gene3D" id="1.20.120.70">
    <property type="entry name" value="Tobacco mosaic virus-like, coat protein"/>
    <property type="match status" value="1"/>
</dbReference>
<dbReference type="InterPro" id="IPR001337">
    <property type="entry name" value="TMV-like_coat"/>
</dbReference>
<dbReference type="InterPro" id="IPR036417">
    <property type="entry name" value="TMV-like_coat_sf"/>
</dbReference>
<dbReference type="Pfam" id="PF00721">
    <property type="entry name" value="TMV_coat"/>
    <property type="match status" value="1"/>
</dbReference>
<dbReference type="SUPFAM" id="SSF47195">
    <property type="entry name" value="TMV-like viral coat proteins"/>
    <property type="match status" value="1"/>
</dbReference>
<proteinExistence type="evidence at protein level"/>
<sequence>MSYNITNSNQYQYFAAVWAEPTPMLNQCVSALSQSYQTQAGRDTVRQQFANLLSTIVAPNQRFPDTGFRVYVNSAVIKPLYEALMKSFDTRNRIIETEEESRPSASEVANATQRVDDATVAIRSQIQLLLNELSNGHGYMNRAEFEAILPWTTAPAT</sequence>
<comment type="function">
    <text>Capsid protein self-assembles to form rod-shaped virions about 18 nm in diameter with a central canal enclosing the viral genomic RNA.</text>
</comment>
<comment type="subcellular location">
    <subcellularLocation>
        <location evidence="3">Virion</location>
    </subcellularLocation>
</comment>
<comment type="similarity">
    <text evidence="3">Belongs to the virgaviridae capsid protein family.</text>
</comment>
<organism>
    <name type="scientific">Ribgrass mosaic virus (strain Hr)</name>
    <name type="common">RMV</name>
    <name type="synonym">TMV strain Holmes ribgrass</name>
    <dbReference type="NCBI Taxonomy" id="12248"/>
    <lineage>
        <taxon>Viruses</taxon>
        <taxon>Riboviria</taxon>
        <taxon>Orthornavirae</taxon>
        <taxon>Kitrinoviricota</taxon>
        <taxon>Alsuviricetes</taxon>
        <taxon>Martellivirales</taxon>
        <taxon>Virgaviridae</taxon>
        <taxon>Tobamovirus</taxon>
        <taxon>Tobacco mosaic virus</taxon>
    </lineage>
</organism>
<evidence type="ECO:0000269" key="1">
    <source>
    </source>
</evidence>
<evidence type="ECO:0000269" key="2">
    <source ref="2"/>
</evidence>
<evidence type="ECO:0000305" key="3"/>
<evidence type="ECO:0007829" key="4">
    <source>
        <dbReference type="PDB" id="1RMV"/>
    </source>
</evidence>
<gene>
    <name type="primary">CP</name>
</gene>
<keyword id="KW-0002">3D-structure</keyword>
<keyword id="KW-0007">Acetylation</keyword>
<keyword id="KW-0167">Capsid protein</keyword>
<keyword id="KW-0903">Direct protein sequencing</keyword>
<keyword id="KW-1139">Helical capsid protein</keyword>
<keyword id="KW-0946">Virion</keyword>
<accession>P03580</accession>
<accession>Q98634</accession>
<name>CAPSD_RMVHR</name>